<keyword id="KW-0903">Direct protein sequencing</keyword>
<keyword id="KW-0528">Neurotoxin</keyword>
<keyword id="KW-0964">Secreted</keyword>
<keyword id="KW-0732">Signal</keyword>
<keyword id="KW-0800">Toxin</keyword>
<proteinExistence type="evidence at protein level"/>
<name>VESP_OPHHA</name>
<organism>
    <name type="scientific">Ophiophagus hannah</name>
    <name type="common">King cobra</name>
    <name type="synonym">Naja hannah</name>
    <dbReference type="NCBI Taxonomy" id="8665"/>
    <lineage>
        <taxon>Eukaryota</taxon>
        <taxon>Metazoa</taxon>
        <taxon>Chordata</taxon>
        <taxon>Craniata</taxon>
        <taxon>Vertebrata</taxon>
        <taxon>Euteleostomi</taxon>
        <taxon>Lepidosauria</taxon>
        <taxon>Squamata</taxon>
        <taxon>Bifurcata</taxon>
        <taxon>Unidentata</taxon>
        <taxon>Episquamata</taxon>
        <taxon>Toxicofera</taxon>
        <taxon>Serpentes</taxon>
        <taxon>Colubroidea</taxon>
        <taxon>Elapidae</taxon>
        <taxon>Elapinae</taxon>
        <taxon>Ophiophagus</taxon>
    </lineage>
</organism>
<dbReference type="EMBL" id="AY351433">
    <property type="protein sequence ID" value="AAR07992.2"/>
    <property type="molecule type" value="mRNA"/>
</dbReference>
<dbReference type="EMBL" id="DQ103590">
    <property type="protein sequence ID" value="AAZ15707.1"/>
    <property type="molecule type" value="Genomic_DNA"/>
</dbReference>
<dbReference type="SMR" id="P83234"/>
<dbReference type="TopDownProteomics" id="P83234"/>
<dbReference type="GO" id="GO:0005576">
    <property type="term" value="C:extracellular region"/>
    <property type="evidence" value="ECO:0007669"/>
    <property type="project" value="UniProtKB-SubCell"/>
</dbReference>
<dbReference type="GO" id="GO:0090729">
    <property type="term" value="F:toxin activity"/>
    <property type="evidence" value="ECO:0007669"/>
    <property type="project" value="UniProtKB-KW"/>
</dbReference>
<dbReference type="Gene3D" id="2.60.120.920">
    <property type="match status" value="1"/>
</dbReference>
<dbReference type="InterPro" id="IPR001870">
    <property type="entry name" value="B30.2/SPRY"/>
</dbReference>
<dbReference type="InterPro" id="IPR043136">
    <property type="entry name" value="B30.2/SPRY_sf"/>
</dbReference>
<dbReference type="InterPro" id="IPR003879">
    <property type="entry name" value="Butyrophylin_SPRY"/>
</dbReference>
<dbReference type="InterPro" id="IPR013320">
    <property type="entry name" value="ConA-like_dom_sf"/>
</dbReference>
<dbReference type="InterPro" id="IPR006574">
    <property type="entry name" value="PRY"/>
</dbReference>
<dbReference type="InterPro" id="IPR003877">
    <property type="entry name" value="SPRY_dom"/>
</dbReference>
<dbReference type="InterPro" id="IPR050143">
    <property type="entry name" value="TRIM/RBCC"/>
</dbReference>
<dbReference type="PANTHER" id="PTHR24103">
    <property type="entry name" value="E3 UBIQUITIN-PROTEIN LIGASE TRIM"/>
    <property type="match status" value="1"/>
</dbReference>
<dbReference type="Pfam" id="PF13765">
    <property type="entry name" value="PRY"/>
    <property type="match status" value="1"/>
</dbReference>
<dbReference type="Pfam" id="PF00622">
    <property type="entry name" value="SPRY"/>
    <property type="match status" value="1"/>
</dbReference>
<dbReference type="PRINTS" id="PR01407">
    <property type="entry name" value="BUTYPHLNCDUF"/>
</dbReference>
<dbReference type="SMART" id="SM00589">
    <property type="entry name" value="PRY"/>
    <property type="match status" value="1"/>
</dbReference>
<dbReference type="SUPFAM" id="SSF49899">
    <property type="entry name" value="Concanavalin A-like lectins/glucanases"/>
    <property type="match status" value="1"/>
</dbReference>
<dbReference type="PROSITE" id="PS50188">
    <property type="entry name" value="B302_SPRY"/>
    <property type="match status" value="1"/>
</dbReference>
<feature type="signal peptide" evidence="2">
    <location>
        <begin position="1"/>
        <end position="20"/>
    </location>
</feature>
<feature type="chain" id="PRO_0000058036" description="Ohanin">
    <location>
        <begin position="21"/>
        <end position="127"/>
    </location>
</feature>
<feature type="propeptide" id="PRO_0000253029">
    <location>
        <begin position="128"/>
        <end position="190"/>
    </location>
</feature>
<feature type="domain" description="B30.2/SPRY" evidence="1">
    <location>
        <begin position="21"/>
        <end position="127"/>
    </location>
</feature>
<protein>
    <recommendedName>
        <fullName evidence="3 4">Ohanin</fullName>
    </recommendedName>
</protein>
<sequence length="190" mass="21174">MLLFTLCFFADQENGGKALASPPGNWQKADVTFDSNTAFESLVVSPDKKTVENVGVPKGVPDSPERFSSSPCVLGSPGFRSGKHFFEVKYGTQREWAVGLAGKSVKRKGYLRLVPEERIWQKGLWWLRRLETDSDKLQKGSGKIIVFLDYDEGKVIFDLDGEVTTIQANFNGEEVVPFYYIGARVSLANL</sequence>
<comment type="function">
    <text evidence="2">Neurotoxin that produces dose-dependent hypolocomotion and hyperalgesia in mice. May directly act on the central nervous system, as it is 6500-fold more potent when administered intracerebroventricularly than intraperitoneal.</text>
</comment>
<comment type="subcellular location">
    <subcellularLocation>
        <location evidence="2 5">Secreted</location>
    </subcellularLocation>
</comment>
<comment type="tissue specificity">
    <text evidence="6">Expressed by the venom gland.</text>
</comment>
<comment type="mass spectrometry" mass="11951.47" error="0.67" method="Electrospray" evidence="2"/>
<comment type="similarity">
    <text evidence="5">Belongs to the ohanin/vespryn family.</text>
</comment>
<accession>P83234</accession>
<accession>Q5QJD7</accession>
<evidence type="ECO:0000255" key="1">
    <source>
        <dbReference type="PROSITE-ProRule" id="PRU00548"/>
    </source>
</evidence>
<evidence type="ECO:0000269" key="2">
    <source>
    </source>
</evidence>
<evidence type="ECO:0000303" key="3">
    <source>
    </source>
</evidence>
<evidence type="ECO:0000303" key="4">
    <source>
    </source>
</evidence>
<evidence type="ECO:0000305" key="5"/>
<evidence type="ECO:0000305" key="6">
    <source>
    </source>
</evidence>
<reference key="1">
    <citation type="journal article" date="2006" name="Gene">
        <title>Ohanin, a novel protein from king cobra venom: its cDNA and genomic organization.</title>
        <authorList>
            <person name="Pung Y.F."/>
            <person name="Kumar S.V."/>
            <person name="Rajagopalan N."/>
            <person name="Fry B.G."/>
            <person name="Kumar P.P."/>
            <person name="Kini R.M."/>
        </authorList>
    </citation>
    <scope>NUCLEOTIDE SEQUENCE [GENOMIC DNA / MRNA]</scope>
    <source>
        <tissue>Liver</tissue>
        <tissue>Venom gland</tissue>
    </source>
</reference>
<reference key="2">
    <citation type="journal article" date="2005" name="J. Biol. Chem.">
        <title>Ohanin, a novel protein from king cobra venom, induces hypolocomotion and hyperalgesia in mice.</title>
        <authorList>
            <person name="Pung Y.F."/>
            <person name="Wong P.T.H."/>
            <person name="Kumar P.P."/>
            <person name="Hodgson W.C."/>
            <person name="Kini R.M."/>
        </authorList>
    </citation>
    <scope>PROTEIN SEQUENCE OF 21-127</scope>
    <scope>SYNTHESIS OF 21-127</scope>
    <scope>FUNCTION</scope>
    <scope>SUBCELLULAR LOCATION</scope>
    <scope>MASS SPECTROMETRY</scope>
    <source>
        <tissue>Venom</tissue>
    </source>
</reference>